<name>MURG_LACPL</name>
<gene>
    <name evidence="1" type="primary">murG</name>
    <name type="ordered locus">lp_2196</name>
</gene>
<organism>
    <name type="scientific">Lactiplantibacillus plantarum (strain ATCC BAA-793 / NCIMB 8826 / WCFS1)</name>
    <name type="common">Lactobacillus plantarum</name>
    <dbReference type="NCBI Taxonomy" id="220668"/>
    <lineage>
        <taxon>Bacteria</taxon>
        <taxon>Bacillati</taxon>
        <taxon>Bacillota</taxon>
        <taxon>Bacilli</taxon>
        <taxon>Lactobacillales</taxon>
        <taxon>Lactobacillaceae</taxon>
        <taxon>Lactiplantibacillus</taxon>
    </lineage>
</organism>
<dbReference type="EC" id="2.4.1.227" evidence="1"/>
<dbReference type="EMBL" id="AL935263">
    <property type="protein sequence ID" value="CCC79415.1"/>
    <property type="molecule type" value="Genomic_DNA"/>
</dbReference>
<dbReference type="RefSeq" id="WP_003640857.1">
    <property type="nucleotide sequence ID" value="NC_004567.2"/>
</dbReference>
<dbReference type="RefSeq" id="YP_004889929.1">
    <property type="nucleotide sequence ID" value="NC_004567.2"/>
</dbReference>
<dbReference type="SMR" id="Q88V81"/>
<dbReference type="STRING" id="220668.lp_2196"/>
<dbReference type="CAZy" id="GT28">
    <property type="family name" value="Glycosyltransferase Family 28"/>
</dbReference>
<dbReference type="EnsemblBacteria" id="CCC79415">
    <property type="protein sequence ID" value="CCC79415"/>
    <property type="gene ID" value="lp_2196"/>
</dbReference>
<dbReference type="KEGG" id="lpl:lp_2196"/>
<dbReference type="PATRIC" id="fig|220668.9.peg.1856"/>
<dbReference type="eggNOG" id="COG0707">
    <property type="taxonomic scope" value="Bacteria"/>
</dbReference>
<dbReference type="HOGENOM" id="CLU_037404_0_1_9"/>
<dbReference type="OrthoDB" id="9808936at2"/>
<dbReference type="PhylomeDB" id="Q88V81"/>
<dbReference type="UniPathway" id="UPA00219"/>
<dbReference type="Proteomes" id="UP000000432">
    <property type="component" value="Chromosome"/>
</dbReference>
<dbReference type="GO" id="GO:0005886">
    <property type="term" value="C:plasma membrane"/>
    <property type="evidence" value="ECO:0007669"/>
    <property type="project" value="UniProtKB-SubCell"/>
</dbReference>
<dbReference type="GO" id="GO:0050511">
    <property type="term" value="F:undecaprenyldiphospho-muramoylpentapeptide beta-N-acetylglucosaminyltransferase activity"/>
    <property type="evidence" value="ECO:0007669"/>
    <property type="project" value="UniProtKB-UniRule"/>
</dbReference>
<dbReference type="GO" id="GO:0005975">
    <property type="term" value="P:carbohydrate metabolic process"/>
    <property type="evidence" value="ECO:0007669"/>
    <property type="project" value="InterPro"/>
</dbReference>
<dbReference type="GO" id="GO:0051301">
    <property type="term" value="P:cell division"/>
    <property type="evidence" value="ECO:0007669"/>
    <property type="project" value="UniProtKB-KW"/>
</dbReference>
<dbReference type="GO" id="GO:0071555">
    <property type="term" value="P:cell wall organization"/>
    <property type="evidence" value="ECO:0007669"/>
    <property type="project" value="UniProtKB-KW"/>
</dbReference>
<dbReference type="GO" id="GO:0030259">
    <property type="term" value="P:lipid glycosylation"/>
    <property type="evidence" value="ECO:0007669"/>
    <property type="project" value="UniProtKB-UniRule"/>
</dbReference>
<dbReference type="GO" id="GO:0009252">
    <property type="term" value="P:peptidoglycan biosynthetic process"/>
    <property type="evidence" value="ECO:0007669"/>
    <property type="project" value="UniProtKB-UniRule"/>
</dbReference>
<dbReference type="GO" id="GO:0008360">
    <property type="term" value="P:regulation of cell shape"/>
    <property type="evidence" value="ECO:0007669"/>
    <property type="project" value="UniProtKB-KW"/>
</dbReference>
<dbReference type="CDD" id="cd03785">
    <property type="entry name" value="GT28_MurG"/>
    <property type="match status" value="1"/>
</dbReference>
<dbReference type="Gene3D" id="3.40.50.2000">
    <property type="entry name" value="Glycogen Phosphorylase B"/>
    <property type="match status" value="2"/>
</dbReference>
<dbReference type="HAMAP" id="MF_00033">
    <property type="entry name" value="MurG"/>
    <property type="match status" value="1"/>
</dbReference>
<dbReference type="InterPro" id="IPR006009">
    <property type="entry name" value="GlcNAc_MurG"/>
</dbReference>
<dbReference type="InterPro" id="IPR007235">
    <property type="entry name" value="Glyco_trans_28_C"/>
</dbReference>
<dbReference type="InterPro" id="IPR004276">
    <property type="entry name" value="GlycoTrans_28_N"/>
</dbReference>
<dbReference type="NCBIfam" id="TIGR01133">
    <property type="entry name" value="murG"/>
    <property type="match status" value="1"/>
</dbReference>
<dbReference type="PANTHER" id="PTHR21015:SF22">
    <property type="entry name" value="GLYCOSYLTRANSFERASE"/>
    <property type="match status" value="1"/>
</dbReference>
<dbReference type="PANTHER" id="PTHR21015">
    <property type="entry name" value="UDP-N-ACETYLGLUCOSAMINE--N-ACETYLMURAMYL-(PENTAPEPTIDE) PYROPHOSPHORYL-UNDECAPRENOL N-ACETYLGLUCOSAMINE TRANSFERASE 1"/>
    <property type="match status" value="1"/>
</dbReference>
<dbReference type="Pfam" id="PF04101">
    <property type="entry name" value="Glyco_tran_28_C"/>
    <property type="match status" value="1"/>
</dbReference>
<dbReference type="Pfam" id="PF03033">
    <property type="entry name" value="Glyco_transf_28"/>
    <property type="match status" value="1"/>
</dbReference>
<dbReference type="SUPFAM" id="SSF53756">
    <property type="entry name" value="UDP-Glycosyltransferase/glycogen phosphorylase"/>
    <property type="match status" value="1"/>
</dbReference>
<sequence>MRLMISGGGTGGHIYPALALIDALKAHDPEAQVQFVGTHRGLESRIVPERGIDFKTIKIQGFKRSLSLQNVKTVYLFLKSVVTARKYIKAFKPDVVVGTGGYVSGAVVFAASQMHIPTVIHEQNSVVGVTNKFLSRFVDKIAISFESARSQFPAQKVVMTGNPRAQQVANIKKSGALAQFDLDPDIPTALIFGGSRGAARINAAAVAAIPELNKRDYQTLFVTGQVHYEKIRNGLSATALAPNVKIEPYIKNMPAILPEVAVILGRAGATSIAEITALGIPSILVPSPYVTNDHQTKNAQSLVNAGAAELIKEADLTGTSLVAALDGLLQSTTHRETMAANAKKLGMPDAADQLLHVLETVIK</sequence>
<keyword id="KW-0131">Cell cycle</keyword>
<keyword id="KW-0132">Cell division</keyword>
<keyword id="KW-1003">Cell membrane</keyword>
<keyword id="KW-0133">Cell shape</keyword>
<keyword id="KW-0961">Cell wall biogenesis/degradation</keyword>
<keyword id="KW-0328">Glycosyltransferase</keyword>
<keyword id="KW-0472">Membrane</keyword>
<keyword id="KW-0573">Peptidoglycan synthesis</keyword>
<keyword id="KW-1185">Reference proteome</keyword>
<keyword id="KW-0808">Transferase</keyword>
<comment type="function">
    <text evidence="1">Cell wall formation. Catalyzes the transfer of a GlcNAc subunit on undecaprenyl-pyrophosphoryl-MurNAc-pentapeptide (lipid intermediate I) to form undecaprenyl-pyrophosphoryl-MurNAc-(pentapeptide)GlcNAc (lipid intermediate II).</text>
</comment>
<comment type="catalytic activity">
    <reaction evidence="1">
        <text>Mur2Ac(oyl-L-Ala-gamma-D-Glu-L-Lys-D-Ala-D-Ala)-di-trans,octa-cis-undecaprenyl diphosphate + UDP-N-acetyl-alpha-D-glucosamine = beta-D-GlcNAc-(1-&gt;4)-Mur2Ac(oyl-L-Ala-gamma-D-Glu-L-Lys-D-Ala-D-Ala)-di-trans,octa-cis-undecaprenyl diphosphate + UDP + H(+)</text>
        <dbReference type="Rhea" id="RHEA:23192"/>
        <dbReference type="ChEBI" id="CHEBI:15378"/>
        <dbReference type="ChEBI" id="CHEBI:57705"/>
        <dbReference type="ChEBI" id="CHEBI:58223"/>
        <dbReference type="ChEBI" id="CHEBI:60032"/>
        <dbReference type="ChEBI" id="CHEBI:60033"/>
        <dbReference type="EC" id="2.4.1.227"/>
    </reaction>
</comment>
<comment type="pathway">
    <text evidence="1">Cell wall biogenesis; peptidoglycan biosynthesis.</text>
</comment>
<comment type="subcellular location">
    <subcellularLocation>
        <location evidence="1">Cell membrane</location>
        <topology evidence="1">Peripheral membrane protein</topology>
        <orientation evidence="1">Cytoplasmic side</orientation>
    </subcellularLocation>
</comment>
<comment type="similarity">
    <text evidence="1">Belongs to the glycosyltransferase 28 family. MurG subfamily.</text>
</comment>
<accession>Q88V81</accession>
<accession>F9UQC6</accession>
<feature type="chain" id="PRO_0000109182" description="UDP-N-acetylglucosamine--N-acetylmuramyl-(pentapeptide) pyrophosphoryl-undecaprenol N-acetylglucosamine transferase">
    <location>
        <begin position="1"/>
        <end position="363"/>
    </location>
</feature>
<feature type="binding site" evidence="1">
    <location>
        <begin position="10"/>
        <end position="12"/>
    </location>
    <ligand>
        <name>UDP-N-acetyl-alpha-D-glucosamine</name>
        <dbReference type="ChEBI" id="CHEBI:57705"/>
    </ligand>
</feature>
<feature type="binding site" evidence="1">
    <location>
        <position position="124"/>
    </location>
    <ligand>
        <name>UDP-N-acetyl-alpha-D-glucosamine</name>
        <dbReference type="ChEBI" id="CHEBI:57705"/>
    </ligand>
</feature>
<feature type="binding site" evidence="1">
    <location>
        <position position="195"/>
    </location>
    <ligand>
        <name>UDP-N-acetyl-alpha-D-glucosamine</name>
        <dbReference type="ChEBI" id="CHEBI:57705"/>
    </ligand>
</feature>
<feature type="binding site" evidence="1">
    <location>
        <position position="250"/>
    </location>
    <ligand>
        <name>UDP-N-acetyl-alpha-D-glucosamine</name>
        <dbReference type="ChEBI" id="CHEBI:57705"/>
    </ligand>
</feature>
<feature type="binding site" evidence="1">
    <location>
        <position position="295"/>
    </location>
    <ligand>
        <name>UDP-N-acetyl-alpha-D-glucosamine</name>
        <dbReference type="ChEBI" id="CHEBI:57705"/>
    </ligand>
</feature>
<reference key="1">
    <citation type="journal article" date="2003" name="Proc. Natl. Acad. Sci. U.S.A.">
        <title>Complete genome sequence of Lactobacillus plantarum WCFS1.</title>
        <authorList>
            <person name="Kleerebezem M."/>
            <person name="Boekhorst J."/>
            <person name="van Kranenburg R."/>
            <person name="Molenaar D."/>
            <person name="Kuipers O.P."/>
            <person name="Leer R."/>
            <person name="Tarchini R."/>
            <person name="Peters S.A."/>
            <person name="Sandbrink H.M."/>
            <person name="Fiers M.W.E.J."/>
            <person name="Stiekema W."/>
            <person name="Klein Lankhorst R.M."/>
            <person name="Bron P.A."/>
            <person name="Hoffer S.M."/>
            <person name="Nierop Groot M.N."/>
            <person name="Kerkhoven R."/>
            <person name="De Vries M."/>
            <person name="Ursing B."/>
            <person name="De Vos W.M."/>
            <person name="Siezen R.J."/>
        </authorList>
    </citation>
    <scope>NUCLEOTIDE SEQUENCE [LARGE SCALE GENOMIC DNA]</scope>
    <source>
        <strain>ATCC BAA-793 / NCIMB 8826 / WCFS1</strain>
    </source>
</reference>
<reference key="2">
    <citation type="journal article" date="2012" name="J. Bacteriol.">
        <title>Complete resequencing and reannotation of the Lactobacillus plantarum WCFS1 genome.</title>
        <authorList>
            <person name="Siezen R.J."/>
            <person name="Francke C."/>
            <person name="Renckens B."/>
            <person name="Boekhorst J."/>
            <person name="Wels M."/>
            <person name="Kleerebezem M."/>
            <person name="van Hijum S.A."/>
        </authorList>
    </citation>
    <scope>NUCLEOTIDE SEQUENCE [LARGE SCALE GENOMIC DNA]</scope>
    <scope>GENOME REANNOTATION</scope>
    <source>
        <strain>ATCC BAA-793 / NCIMB 8826 / WCFS1</strain>
    </source>
</reference>
<evidence type="ECO:0000255" key="1">
    <source>
        <dbReference type="HAMAP-Rule" id="MF_00033"/>
    </source>
</evidence>
<protein>
    <recommendedName>
        <fullName evidence="1">UDP-N-acetylglucosamine--N-acetylmuramyl-(pentapeptide) pyrophosphoryl-undecaprenol N-acetylglucosamine transferase</fullName>
        <ecNumber evidence="1">2.4.1.227</ecNumber>
    </recommendedName>
    <alternativeName>
        <fullName evidence="1">Undecaprenyl-PP-MurNAc-pentapeptide-UDPGlcNAc GlcNAc transferase</fullName>
    </alternativeName>
</protein>
<proteinExistence type="inferred from homology"/>